<organism>
    <name type="scientific">Streptococcus agalactiae serotype V (strain ATCC BAA-611 / 2603 V/R)</name>
    <dbReference type="NCBI Taxonomy" id="208435"/>
    <lineage>
        <taxon>Bacteria</taxon>
        <taxon>Bacillati</taxon>
        <taxon>Bacillota</taxon>
        <taxon>Bacilli</taxon>
        <taxon>Lactobacillales</taxon>
        <taxon>Streptococcaceae</taxon>
        <taxon>Streptococcus</taxon>
    </lineage>
</organism>
<sequence length="927" mass="102429">MSKKRLHEIAKEIGKTSKEVVEQAQSLGLPVKSHASSVEENDATRIVESFSSSKTKAPTNSVQTNQGVKTESKTVETKQGLSDDKPSTQPVAKPKPQSRNFKAEREARAKAEAEKRQHNGDHRKNNRHNDTRSDDRRHQGQKRSNGNRNDNRQGQQNNRNKNDGRYADHKQKPQTRPQQPAGNRIDFKARAAALKAEQNAEYSRHSEQRFREEQEAKRQAAKEQELAKAAALKAQEEAQKAKEKLASKPVAKVKEIVNKVAATPSQTADSRRKKQTRSDKSRQFSNENEDGQKQTRNKKNWNNQNQVRNQRNSNWNHNKKNKKGKTNGAPKPVTERKFHELPKEFEYTEGMTVAEIAKRIKREPAEIVKKLFMMGVMATQNQSLDGDTIELLMVDYGIEAHAKVEVDEADIERFFADEDYLNPDNLTERPPVVTIMGHVDHGKTTLLDTLRNSRVATGEAGGITQHIGAYQIEEAGKKITFLDTPGHAAFTSMRARGASVTDITILIVAADDGVMPQTVEAINHSKAAGVPIIVAINKIDKPGANPERVISELAEHGVISTAWGGESEFVEISAKFGKNIQELLETVLLVAEMEELKADADVRAIGTVIEARLDKGKGAVATLLVQQGTLNVQDPIVVGNTFGRVRAMTNDLGRRVKVAGPSTPVSITGLNEAPMAGDHFAVYADEKAARAAGEERAKRALLKQRQNTQRVSLENLFDTLKAGEVKSVNVIIKADVQGSVEALAASLLKIDVEGVKVNVVHSAVGAINESDVTLAEASNAVIIGFNVRPTPQARQQADADDVEIRQHSIIYKVIEEVEEAMKGKLDPEYQEKILGEAIIRETFKVSKVGTIGGFMVINGKVTRDSSVRVIRDGVVIFDGKLASLKHYKDDVKEVGNAQEGGLMIENYNDLKEDDTIEAYIMEEIKRK</sequence>
<evidence type="ECO:0000250" key="1"/>
<evidence type="ECO:0000255" key="2">
    <source>
        <dbReference type="HAMAP-Rule" id="MF_00100"/>
    </source>
</evidence>
<evidence type="ECO:0000256" key="3">
    <source>
        <dbReference type="SAM" id="MobiDB-lite"/>
    </source>
</evidence>
<reference key="1">
    <citation type="journal article" date="2002" name="Proc. Natl. Acad. Sci. U.S.A.">
        <title>Complete genome sequence and comparative genomic analysis of an emerging human pathogen, serotype V Streptococcus agalactiae.</title>
        <authorList>
            <person name="Tettelin H."/>
            <person name="Masignani V."/>
            <person name="Cieslewicz M.J."/>
            <person name="Eisen J.A."/>
            <person name="Peterson S.N."/>
            <person name="Wessels M.R."/>
            <person name="Paulsen I.T."/>
            <person name="Nelson K.E."/>
            <person name="Margarit I."/>
            <person name="Read T.D."/>
            <person name="Madoff L.C."/>
            <person name="Wolf A.M."/>
            <person name="Beanan M.J."/>
            <person name="Brinkac L.M."/>
            <person name="Daugherty S.C."/>
            <person name="DeBoy R.T."/>
            <person name="Durkin A.S."/>
            <person name="Kolonay J.F."/>
            <person name="Madupu R."/>
            <person name="Lewis M.R."/>
            <person name="Radune D."/>
            <person name="Fedorova N.B."/>
            <person name="Scanlan D."/>
            <person name="Khouri H.M."/>
            <person name="Mulligan S."/>
            <person name="Carty H.A."/>
            <person name="Cline R.T."/>
            <person name="Van Aken S.E."/>
            <person name="Gill J."/>
            <person name="Scarselli M."/>
            <person name="Mora M."/>
            <person name="Iacobini E.T."/>
            <person name="Brettoni C."/>
            <person name="Galli G."/>
            <person name="Mariani M."/>
            <person name="Vegni F."/>
            <person name="Maione D."/>
            <person name="Rinaudo D."/>
            <person name="Rappuoli R."/>
            <person name="Telford J.L."/>
            <person name="Kasper D.L."/>
            <person name="Grandi G."/>
            <person name="Fraser C.M."/>
        </authorList>
    </citation>
    <scope>NUCLEOTIDE SEQUENCE [LARGE SCALE GENOMIC DNA]</scope>
    <source>
        <strain>ATCC BAA-611 / 2603 V/R</strain>
    </source>
</reference>
<feature type="chain" id="PRO_0000137259" description="Translation initiation factor IF-2">
    <location>
        <begin position="1"/>
        <end position="927"/>
    </location>
</feature>
<feature type="domain" description="tr-type G">
    <location>
        <begin position="428"/>
        <end position="597"/>
    </location>
</feature>
<feature type="region of interest" description="Disordered" evidence="3">
    <location>
        <begin position="27"/>
        <end position="337"/>
    </location>
</feature>
<feature type="region of interest" description="G1" evidence="1">
    <location>
        <begin position="437"/>
        <end position="444"/>
    </location>
</feature>
<feature type="region of interest" description="G2" evidence="1">
    <location>
        <begin position="462"/>
        <end position="466"/>
    </location>
</feature>
<feature type="region of interest" description="G3" evidence="1">
    <location>
        <begin position="483"/>
        <end position="486"/>
    </location>
</feature>
<feature type="region of interest" description="G4" evidence="1">
    <location>
        <begin position="537"/>
        <end position="540"/>
    </location>
</feature>
<feature type="region of interest" description="G5" evidence="1">
    <location>
        <begin position="573"/>
        <end position="575"/>
    </location>
</feature>
<feature type="compositionally biased region" description="Polar residues" evidence="3">
    <location>
        <begin position="49"/>
        <end position="69"/>
    </location>
</feature>
<feature type="compositionally biased region" description="Basic and acidic residues" evidence="3">
    <location>
        <begin position="70"/>
        <end position="86"/>
    </location>
</feature>
<feature type="compositionally biased region" description="Basic and acidic residues" evidence="3">
    <location>
        <begin position="101"/>
        <end position="138"/>
    </location>
</feature>
<feature type="compositionally biased region" description="Low complexity" evidence="3">
    <location>
        <begin position="146"/>
        <end position="159"/>
    </location>
</feature>
<feature type="compositionally biased region" description="Basic and acidic residues" evidence="3">
    <location>
        <begin position="160"/>
        <end position="171"/>
    </location>
</feature>
<feature type="compositionally biased region" description="Basic and acidic residues" evidence="3">
    <location>
        <begin position="202"/>
        <end position="226"/>
    </location>
</feature>
<feature type="compositionally biased region" description="Basic and acidic residues" evidence="3">
    <location>
        <begin position="234"/>
        <end position="257"/>
    </location>
</feature>
<feature type="compositionally biased region" description="Low complexity" evidence="3">
    <location>
        <begin position="300"/>
        <end position="316"/>
    </location>
</feature>
<feature type="binding site" evidence="2">
    <location>
        <begin position="437"/>
        <end position="444"/>
    </location>
    <ligand>
        <name>GTP</name>
        <dbReference type="ChEBI" id="CHEBI:37565"/>
    </ligand>
</feature>
<feature type="binding site" evidence="2">
    <location>
        <begin position="483"/>
        <end position="487"/>
    </location>
    <ligand>
        <name>GTP</name>
        <dbReference type="ChEBI" id="CHEBI:37565"/>
    </ligand>
</feature>
<feature type="binding site" evidence="2">
    <location>
        <begin position="537"/>
        <end position="540"/>
    </location>
    <ligand>
        <name>GTP</name>
        <dbReference type="ChEBI" id="CHEBI:37565"/>
    </ligand>
</feature>
<name>IF2_STRA5</name>
<dbReference type="EMBL" id="AE009948">
    <property type="protein sequence ID" value="AAM99287.1"/>
    <property type="molecule type" value="Genomic_DNA"/>
</dbReference>
<dbReference type="RefSeq" id="NP_687415.1">
    <property type="nucleotide sequence ID" value="NC_004116.1"/>
</dbReference>
<dbReference type="SMR" id="Q8E1H3"/>
<dbReference type="STRING" id="208435.SAG0381"/>
<dbReference type="KEGG" id="sag:SAG0381"/>
<dbReference type="PATRIC" id="fig|208435.3.peg.376"/>
<dbReference type="HOGENOM" id="CLU_006301_5_0_9"/>
<dbReference type="OrthoDB" id="9811804at2"/>
<dbReference type="Proteomes" id="UP000000821">
    <property type="component" value="Chromosome"/>
</dbReference>
<dbReference type="GO" id="GO:0005829">
    <property type="term" value="C:cytosol"/>
    <property type="evidence" value="ECO:0007669"/>
    <property type="project" value="TreeGrafter"/>
</dbReference>
<dbReference type="GO" id="GO:0005525">
    <property type="term" value="F:GTP binding"/>
    <property type="evidence" value="ECO:0007669"/>
    <property type="project" value="UniProtKB-KW"/>
</dbReference>
<dbReference type="GO" id="GO:0003924">
    <property type="term" value="F:GTPase activity"/>
    <property type="evidence" value="ECO:0007669"/>
    <property type="project" value="UniProtKB-UniRule"/>
</dbReference>
<dbReference type="GO" id="GO:0003743">
    <property type="term" value="F:translation initiation factor activity"/>
    <property type="evidence" value="ECO:0007669"/>
    <property type="project" value="UniProtKB-UniRule"/>
</dbReference>
<dbReference type="CDD" id="cd01887">
    <property type="entry name" value="IF2_eIF5B"/>
    <property type="match status" value="1"/>
</dbReference>
<dbReference type="CDD" id="cd03702">
    <property type="entry name" value="IF2_mtIF2_II"/>
    <property type="match status" value="1"/>
</dbReference>
<dbReference type="CDD" id="cd03692">
    <property type="entry name" value="mtIF2_IVc"/>
    <property type="match status" value="1"/>
</dbReference>
<dbReference type="FunFam" id="2.40.30.10:FF:000007">
    <property type="entry name" value="Translation initiation factor IF-2"/>
    <property type="match status" value="1"/>
</dbReference>
<dbReference type="FunFam" id="2.40.30.10:FF:000008">
    <property type="entry name" value="Translation initiation factor IF-2"/>
    <property type="match status" value="1"/>
</dbReference>
<dbReference type="FunFam" id="3.40.50.10050:FF:000001">
    <property type="entry name" value="Translation initiation factor IF-2"/>
    <property type="match status" value="1"/>
</dbReference>
<dbReference type="FunFam" id="3.40.50.300:FF:000019">
    <property type="entry name" value="Translation initiation factor IF-2"/>
    <property type="match status" value="1"/>
</dbReference>
<dbReference type="Gene3D" id="1.10.10.2480">
    <property type="match status" value="1"/>
</dbReference>
<dbReference type="Gene3D" id="3.40.50.300">
    <property type="entry name" value="P-loop containing nucleotide triphosphate hydrolases"/>
    <property type="match status" value="1"/>
</dbReference>
<dbReference type="Gene3D" id="2.40.30.10">
    <property type="entry name" value="Translation factors"/>
    <property type="match status" value="2"/>
</dbReference>
<dbReference type="Gene3D" id="3.40.50.10050">
    <property type="entry name" value="Translation initiation factor IF- 2, domain 3"/>
    <property type="match status" value="1"/>
</dbReference>
<dbReference type="HAMAP" id="MF_00100_B">
    <property type="entry name" value="IF_2_B"/>
    <property type="match status" value="1"/>
</dbReference>
<dbReference type="InterPro" id="IPR053905">
    <property type="entry name" value="EF-G-like_DII"/>
</dbReference>
<dbReference type="InterPro" id="IPR044145">
    <property type="entry name" value="IF2_II"/>
</dbReference>
<dbReference type="InterPro" id="IPR006847">
    <property type="entry name" value="IF2_N"/>
</dbReference>
<dbReference type="InterPro" id="IPR027417">
    <property type="entry name" value="P-loop_NTPase"/>
</dbReference>
<dbReference type="InterPro" id="IPR005225">
    <property type="entry name" value="Small_GTP-bd"/>
</dbReference>
<dbReference type="InterPro" id="IPR000795">
    <property type="entry name" value="T_Tr_GTP-bd_dom"/>
</dbReference>
<dbReference type="InterPro" id="IPR000178">
    <property type="entry name" value="TF_IF2_bacterial-like"/>
</dbReference>
<dbReference type="InterPro" id="IPR015760">
    <property type="entry name" value="TIF_IF2"/>
</dbReference>
<dbReference type="InterPro" id="IPR023115">
    <property type="entry name" value="TIF_IF2_dom3"/>
</dbReference>
<dbReference type="InterPro" id="IPR036925">
    <property type="entry name" value="TIF_IF2_dom3_sf"/>
</dbReference>
<dbReference type="InterPro" id="IPR009000">
    <property type="entry name" value="Transl_B-barrel_sf"/>
</dbReference>
<dbReference type="NCBIfam" id="TIGR00487">
    <property type="entry name" value="IF-2"/>
    <property type="match status" value="1"/>
</dbReference>
<dbReference type="NCBIfam" id="TIGR00231">
    <property type="entry name" value="small_GTP"/>
    <property type="match status" value="1"/>
</dbReference>
<dbReference type="PANTHER" id="PTHR43381:SF5">
    <property type="entry name" value="TR-TYPE G DOMAIN-CONTAINING PROTEIN"/>
    <property type="match status" value="1"/>
</dbReference>
<dbReference type="PANTHER" id="PTHR43381">
    <property type="entry name" value="TRANSLATION INITIATION FACTOR IF-2-RELATED"/>
    <property type="match status" value="1"/>
</dbReference>
<dbReference type="Pfam" id="PF22042">
    <property type="entry name" value="EF-G_D2"/>
    <property type="match status" value="1"/>
</dbReference>
<dbReference type="Pfam" id="PF00009">
    <property type="entry name" value="GTP_EFTU"/>
    <property type="match status" value="1"/>
</dbReference>
<dbReference type="Pfam" id="PF11987">
    <property type="entry name" value="IF-2"/>
    <property type="match status" value="1"/>
</dbReference>
<dbReference type="Pfam" id="PF04760">
    <property type="entry name" value="IF2_N"/>
    <property type="match status" value="2"/>
</dbReference>
<dbReference type="SUPFAM" id="SSF52156">
    <property type="entry name" value="Initiation factor IF2/eIF5b, domain 3"/>
    <property type="match status" value="1"/>
</dbReference>
<dbReference type="SUPFAM" id="SSF52540">
    <property type="entry name" value="P-loop containing nucleoside triphosphate hydrolases"/>
    <property type="match status" value="1"/>
</dbReference>
<dbReference type="SUPFAM" id="SSF50447">
    <property type="entry name" value="Translation proteins"/>
    <property type="match status" value="2"/>
</dbReference>
<dbReference type="PROSITE" id="PS51722">
    <property type="entry name" value="G_TR_2"/>
    <property type="match status" value="1"/>
</dbReference>
<dbReference type="PROSITE" id="PS01176">
    <property type="entry name" value="IF2"/>
    <property type="match status" value="1"/>
</dbReference>
<comment type="function">
    <text evidence="2">One of the essential components for the initiation of protein synthesis. Protects formylmethionyl-tRNA from spontaneous hydrolysis and promotes its binding to the 30S ribosomal subunits. Also involved in the hydrolysis of GTP during the formation of the 70S ribosomal complex.</text>
</comment>
<comment type="subcellular location">
    <subcellularLocation>
        <location evidence="2">Cytoplasm</location>
    </subcellularLocation>
</comment>
<comment type="similarity">
    <text evidence="2">Belongs to the TRAFAC class translation factor GTPase superfamily. Classic translation factor GTPase family. IF-2 subfamily.</text>
</comment>
<accession>Q8E1H3</accession>
<protein>
    <recommendedName>
        <fullName evidence="2">Translation initiation factor IF-2</fullName>
    </recommendedName>
</protein>
<keyword id="KW-0963">Cytoplasm</keyword>
<keyword id="KW-0342">GTP-binding</keyword>
<keyword id="KW-0396">Initiation factor</keyword>
<keyword id="KW-0547">Nucleotide-binding</keyword>
<keyword id="KW-0648">Protein biosynthesis</keyword>
<keyword id="KW-1185">Reference proteome</keyword>
<gene>
    <name evidence="2" type="primary">infB</name>
    <name type="ordered locus">SAG0381</name>
</gene>
<proteinExistence type="inferred from homology"/>